<comment type="function">
    <text evidence="3">Cytochrome P450 monooxygenase; part of the gene cluster that mediates the biosynthesis of talaronoid C, a fusicoccane diterpenoid with an unprecedented tricyclic 5/8/6 ring system (PubMed:36126322). The first step in the pathway is performed by the fusicoccadiene synthase tndC that possesses both prenyl transferase and terpene cyclase activity, converting isopentenyl diphosphate and dimethylallyl diphosphate into geranylgeranyl diphosphate (GGDP) and further converting GGDP into talarodiene, a precursor for talaronoid C (PubMed:36126322). The remaining enzymes from the cluster include the cytochrome P450 monooxygenase tndB, the aldehyde reductase tndE and the alcohol dehydrogenase tndF that are involved in the conversion of talarodiene into talaronoid C (PubMed:36126322).</text>
</comment>
<comment type="cofactor">
    <cofactor evidence="1">
        <name>heme</name>
        <dbReference type="ChEBI" id="CHEBI:30413"/>
    </cofactor>
</comment>
<comment type="pathway">
    <text evidence="3">Secondary metabolite biosynthesis; terpenoid biosynthesis.</text>
</comment>
<comment type="subcellular location">
    <subcellularLocation>
        <location evidence="2">Membrane</location>
        <topology evidence="2">Single-pass membrane protein</topology>
    </subcellularLocation>
</comment>
<comment type="disruption phenotype">
    <text evidence="3">Leads to the accumulation of talarodiene.</text>
</comment>
<comment type="similarity">
    <text evidence="5">Belongs to the cytochrome P450 family.</text>
</comment>
<protein>
    <recommendedName>
        <fullName evidence="4">Cytochrome P450 monooxygenase tndB</fullName>
        <ecNumber evidence="6">1.-.-.-</ecNumber>
    </recommendedName>
    <alternativeName>
        <fullName evidence="4">Talaronoid C biosynthesis cluster protein B</fullName>
    </alternativeName>
</protein>
<reference key="1">
    <citation type="journal article" date="2022" name="Org. Lett.">
        <title>Identification and characterization of a cryptic bifunctional type I diterpene synthase involved in talaronoid biosynthesis from a marine-derived fungus.</title>
        <authorList>
            <person name="Zhang P."/>
            <person name="Wu G."/>
            <person name="Heard S.C."/>
            <person name="Niu C."/>
            <person name="Bell S.A."/>
            <person name="Li F."/>
            <person name="Ye Y."/>
            <person name="Zhang Y."/>
            <person name="Winter J.M."/>
        </authorList>
    </citation>
    <scope>NUCLEOTIDE SEQUENCE [GENOMIC DNA]</scope>
    <scope>FUNCTION</scope>
    <scope>DISRUPTION PHENOTYPE</scope>
    <scope>PATHWAY</scope>
    <source>
        <strain>CNL-338</strain>
    </source>
</reference>
<organism>
    <name type="scientific">Aspergillus flavipes</name>
    <dbReference type="NCBI Taxonomy" id="41900"/>
    <lineage>
        <taxon>Eukaryota</taxon>
        <taxon>Fungi</taxon>
        <taxon>Dikarya</taxon>
        <taxon>Ascomycota</taxon>
        <taxon>Pezizomycotina</taxon>
        <taxon>Eurotiomycetes</taxon>
        <taxon>Eurotiomycetidae</taxon>
        <taxon>Eurotiales</taxon>
        <taxon>Aspergillaceae</taxon>
        <taxon>Aspergillus</taxon>
        <taxon>Aspergillus subgen. Circumdati</taxon>
    </lineage>
</organism>
<sequence length="485" mass="55685">MEGLYKEAVTFADRYNLLNVYGISAVIAVGLAIYSASLAIYRLYFHPLAGFPGPRIAAATRWYEFYYDVIKRGQYVYKIEEMHQKYGPIIRINPHEIVINDPDFYNSVYVAGNTRRTAIWPRYRTGIGFDGSHTMTENHELHRRRRKPLEPFFSRMGIDKMEPMIIEEAKLLNDRLTGLKGSGNVIRLDHVFSAFAGDVIGRICSESPPDMMNHPEFGKEWSAQFDREYRETAPFVHARPATGLVSSLSQSTSACPNRDRLARMIPTGFLLRVYPGAAGFNVFRQLAISHIVDAKKDNFSKEKVEKNSKSSVFRYIITSEMPASECETERLSREAMVLFGAGTATTARTMGFMCYYILTNPHMRERLADELRDVMADYPHKLPSWQELERLPYLQAMIKEGLRLSYGVMRRLPRISPDIPLVYKQWSIPAGTPVGMAAYSLHTDPEVYPEPFKFIPERWLGKYDSRMDRNWVPFSRGSRNCLGMK</sequence>
<dbReference type="EC" id="1.-.-.-" evidence="6"/>
<dbReference type="EMBL" id="MW248390">
    <property type="protein sequence ID" value="QVR97761.1"/>
    <property type="molecule type" value="Genomic_DNA"/>
</dbReference>
<dbReference type="SMR" id="A0A8K1AW54"/>
<dbReference type="UniPathway" id="UPA00213"/>
<dbReference type="GO" id="GO:0016020">
    <property type="term" value="C:membrane"/>
    <property type="evidence" value="ECO:0007669"/>
    <property type="project" value="UniProtKB-SubCell"/>
</dbReference>
<dbReference type="GO" id="GO:0020037">
    <property type="term" value="F:heme binding"/>
    <property type="evidence" value="ECO:0007669"/>
    <property type="project" value="InterPro"/>
</dbReference>
<dbReference type="GO" id="GO:0005506">
    <property type="term" value="F:iron ion binding"/>
    <property type="evidence" value="ECO:0007669"/>
    <property type="project" value="InterPro"/>
</dbReference>
<dbReference type="GO" id="GO:0004497">
    <property type="term" value="F:monooxygenase activity"/>
    <property type="evidence" value="ECO:0007669"/>
    <property type="project" value="UniProtKB-KW"/>
</dbReference>
<dbReference type="GO" id="GO:0016705">
    <property type="term" value="F:oxidoreductase activity, acting on paired donors, with incorporation or reduction of molecular oxygen"/>
    <property type="evidence" value="ECO:0007669"/>
    <property type="project" value="InterPro"/>
</dbReference>
<dbReference type="GO" id="GO:0016114">
    <property type="term" value="P:terpenoid biosynthetic process"/>
    <property type="evidence" value="ECO:0007669"/>
    <property type="project" value="UniProtKB-UniPathway"/>
</dbReference>
<dbReference type="CDD" id="cd11062">
    <property type="entry name" value="CYP58-like"/>
    <property type="match status" value="1"/>
</dbReference>
<dbReference type="Gene3D" id="1.10.630.10">
    <property type="entry name" value="Cytochrome P450"/>
    <property type="match status" value="1"/>
</dbReference>
<dbReference type="InterPro" id="IPR001128">
    <property type="entry name" value="Cyt_P450"/>
</dbReference>
<dbReference type="InterPro" id="IPR017972">
    <property type="entry name" value="Cyt_P450_CS"/>
</dbReference>
<dbReference type="InterPro" id="IPR002401">
    <property type="entry name" value="Cyt_P450_E_grp-I"/>
</dbReference>
<dbReference type="InterPro" id="IPR036396">
    <property type="entry name" value="Cyt_P450_sf"/>
</dbReference>
<dbReference type="InterPro" id="IPR050121">
    <property type="entry name" value="Cytochrome_P450_monoxygenase"/>
</dbReference>
<dbReference type="PANTHER" id="PTHR24305">
    <property type="entry name" value="CYTOCHROME P450"/>
    <property type="match status" value="1"/>
</dbReference>
<dbReference type="PANTHER" id="PTHR24305:SF157">
    <property type="entry name" value="N-ACETYLTRYPTOPHAN 6-HYDROXYLASE IVOC-RELATED"/>
    <property type="match status" value="1"/>
</dbReference>
<dbReference type="Pfam" id="PF00067">
    <property type="entry name" value="p450"/>
    <property type="match status" value="1"/>
</dbReference>
<dbReference type="PRINTS" id="PR00463">
    <property type="entry name" value="EP450I"/>
</dbReference>
<dbReference type="PRINTS" id="PR00385">
    <property type="entry name" value="P450"/>
</dbReference>
<dbReference type="SUPFAM" id="SSF48264">
    <property type="entry name" value="Cytochrome P450"/>
    <property type="match status" value="1"/>
</dbReference>
<dbReference type="PROSITE" id="PS00086">
    <property type="entry name" value="CYTOCHROME_P450"/>
    <property type="match status" value="1"/>
</dbReference>
<accession>A0A8K1AW54</accession>
<name>TNDB_ASPFV</name>
<gene>
    <name evidence="4" type="primary">tndB</name>
</gene>
<keyword id="KW-0349">Heme</keyword>
<keyword id="KW-0408">Iron</keyword>
<keyword id="KW-0472">Membrane</keyword>
<keyword id="KW-0479">Metal-binding</keyword>
<keyword id="KW-0503">Monooxygenase</keyword>
<keyword id="KW-0560">Oxidoreductase</keyword>
<keyword id="KW-0812">Transmembrane</keyword>
<keyword id="KW-1133">Transmembrane helix</keyword>
<evidence type="ECO:0000250" key="1">
    <source>
        <dbReference type="UniProtKB" id="P04798"/>
    </source>
</evidence>
<evidence type="ECO:0000255" key="2"/>
<evidence type="ECO:0000269" key="3">
    <source>
    </source>
</evidence>
<evidence type="ECO:0000303" key="4">
    <source>
    </source>
</evidence>
<evidence type="ECO:0000305" key="5"/>
<evidence type="ECO:0000305" key="6">
    <source>
    </source>
</evidence>
<proteinExistence type="inferred from homology"/>
<feature type="chain" id="PRO_0000457140" description="Cytochrome P450 monooxygenase tndB">
    <location>
        <begin position="1"/>
        <end position="485"/>
    </location>
</feature>
<feature type="transmembrane region" description="Helical" evidence="2">
    <location>
        <begin position="20"/>
        <end position="40"/>
    </location>
</feature>
<feature type="binding site" description="axial binding residue" evidence="1">
    <location>
        <position position="481"/>
    </location>
    <ligand>
        <name>heme</name>
        <dbReference type="ChEBI" id="CHEBI:30413"/>
    </ligand>
    <ligandPart>
        <name>Fe</name>
        <dbReference type="ChEBI" id="CHEBI:18248"/>
    </ligandPart>
</feature>